<organismHost>
    <name type="scientific">Acidianus hospitalis</name>
    <dbReference type="NCBI Taxonomy" id="563177"/>
</organismHost>
<organismHost>
    <name type="scientific">Acidianus infernus</name>
    <dbReference type="NCBI Taxonomy" id="12915"/>
</organismHost>
<feature type="chain" id="PRO_0000384537" description="Uncharacterized protein ORF48">
    <location>
        <begin position="1"/>
        <end position="48"/>
    </location>
</feature>
<accession>Q70LE1</accession>
<proteinExistence type="predicted"/>
<name>Y048_AFV1Y</name>
<keyword id="KW-1185">Reference proteome</keyword>
<protein>
    <recommendedName>
        <fullName>Uncharacterized protein ORF48</fullName>
    </recommendedName>
</protein>
<sequence length="48" mass="5593">MRVVTFKAEEELLALLDRYAMNKGLYRSEVIREAIIEFLSVRGYKVNG</sequence>
<gene>
    <name type="ORF">ORF48</name>
</gene>
<dbReference type="EMBL" id="AJ567472">
    <property type="protein sequence ID" value="CAD98939.1"/>
    <property type="molecule type" value="Genomic_DNA"/>
</dbReference>
<dbReference type="RefSeq" id="YP_003735.1">
    <property type="nucleotide sequence ID" value="NC_005830.1"/>
</dbReference>
<dbReference type="SMR" id="Q70LE1"/>
<dbReference type="KEGG" id="vg:2769169"/>
<dbReference type="Proteomes" id="UP000000514">
    <property type="component" value="Genome"/>
</dbReference>
<dbReference type="GO" id="GO:0006355">
    <property type="term" value="P:regulation of DNA-templated transcription"/>
    <property type="evidence" value="ECO:0007669"/>
    <property type="project" value="InterPro"/>
</dbReference>
<dbReference type="CDD" id="cd22231">
    <property type="entry name" value="RHH_NikR_HicB-like"/>
    <property type="match status" value="1"/>
</dbReference>
<dbReference type="Gene3D" id="1.10.1220.10">
    <property type="entry name" value="Met repressor-like"/>
    <property type="match status" value="1"/>
</dbReference>
<dbReference type="InterPro" id="IPR013321">
    <property type="entry name" value="Arc_rbn_hlx_hlx"/>
</dbReference>
<dbReference type="InterPro" id="IPR002145">
    <property type="entry name" value="CopG"/>
</dbReference>
<dbReference type="InterPro" id="IPR010985">
    <property type="entry name" value="Ribbon_hlx_hlx"/>
</dbReference>
<dbReference type="Pfam" id="PF01402">
    <property type="entry name" value="RHH_1"/>
    <property type="match status" value="1"/>
</dbReference>
<dbReference type="SUPFAM" id="SSF47598">
    <property type="entry name" value="Ribbon-helix-helix"/>
    <property type="match status" value="1"/>
</dbReference>
<organism>
    <name type="scientific">Acidianus filamentous virus 1 (isolate United States/Yellowstone)</name>
    <name type="common">AFV-1</name>
    <dbReference type="NCBI Taxonomy" id="654909"/>
    <lineage>
        <taxon>Viruses</taxon>
        <taxon>Adnaviria</taxon>
        <taxon>Zilligvirae</taxon>
        <taxon>Taleaviricota</taxon>
        <taxon>Tokiviricetes</taxon>
        <taxon>Ligamenvirales</taxon>
        <taxon>Ungulaviridae</taxon>
        <taxon>Captovirus</taxon>
        <taxon>Acidianus filamentous virus 1</taxon>
    </lineage>
</organism>
<reference key="1">
    <citation type="journal article" date="2003" name="Virology">
        <title>AFV1, a novel virus infecting hyperthermophilic archaea of the genus acidianus.</title>
        <authorList>
            <person name="Bettstetter M."/>
            <person name="Peng X."/>
            <person name="Garrett R.A."/>
            <person name="Prangishvili D."/>
        </authorList>
    </citation>
    <scope>NUCLEOTIDE SEQUENCE [GENOMIC DNA]</scope>
</reference>